<accession>B5FBS2</accession>
<protein>
    <recommendedName>
        <fullName evidence="1">Phosphatidylserine decarboxylase proenzyme</fullName>
        <ecNumber evidence="1">4.1.1.65</ecNumber>
    </recommendedName>
    <component>
        <recommendedName>
            <fullName evidence="1">Phosphatidylserine decarboxylase alpha chain</fullName>
        </recommendedName>
    </component>
    <component>
        <recommendedName>
            <fullName evidence="1">Phosphatidylserine decarboxylase beta chain</fullName>
        </recommendedName>
    </component>
</protein>
<evidence type="ECO:0000255" key="1">
    <source>
        <dbReference type="HAMAP-Rule" id="MF_00662"/>
    </source>
</evidence>
<dbReference type="EC" id="4.1.1.65" evidence="1"/>
<dbReference type="EMBL" id="CP001139">
    <property type="protein sequence ID" value="ACH67234.1"/>
    <property type="molecule type" value="Genomic_DNA"/>
</dbReference>
<dbReference type="RefSeq" id="WP_012534291.1">
    <property type="nucleotide sequence ID" value="NC_011184.1"/>
</dbReference>
<dbReference type="SMR" id="B5FBS2"/>
<dbReference type="KEGG" id="vfm:VFMJ11_2453"/>
<dbReference type="HOGENOM" id="CLU_029061_4_1_6"/>
<dbReference type="UniPathway" id="UPA00558">
    <property type="reaction ID" value="UER00616"/>
</dbReference>
<dbReference type="Proteomes" id="UP000001857">
    <property type="component" value="Chromosome I"/>
</dbReference>
<dbReference type="GO" id="GO:0005886">
    <property type="term" value="C:plasma membrane"/>
    <property type="evidence" value="ECO:0007669"/>
    <property type="project" value="UniProtKB-SubCell"/>
</dbReference>
<dbReference type="GO" id="GO:0004609">
    <property type="term" value="F:phosphatidylserine decarboxylase activity"/>
    <property type="evidence" value="ECO:0007669"/>
    <property type="project" value="UniProtKB-UniRule"/>
</dbReference>
<dbReference type="GO" id="GO:0006646">
    <property type="term" value="P:phosphatidylethanolamine biosynthetic process"/>
    <property type="evidence" value="ECO:0007669"/>
    <property type="project" value="UniProtKB-UniRule"/>
</dbReference>
<dbReference type="HAMAP" id="MF_00662">
    <property type="entry name" value="PS_decarb_PSD_B_type1"/>
    <property type="match status" value="1"/>
</dbReference>
<dbReference type="InterPro" id="IPR003817">
    <property type="entry name" value="PS_Dcarbxylase"/>
</dbReference>
<dbReference type="InterPro" id="IPR033177">
    <property type="entry name" value="PSD-B"/>
</dbReference>
<dbReference type="InterPro" id="IPR033178">
    <property type="entry name" value="PSD_type1_pro"/>
</dbReference>
<dbReference type="NCBIfam" id="TIGR00163">
    <property type="entry name" value="PS_decarb"/>
    <property type="match status" value="1"/>
</dbReference>
<dbReference type="PANTHER" id="PTHR10067">
    <property type="entry name" value="PHOSPHATIDYLSERINE DECARBOXYLASE"/>
    <property type="match status" value="1"/>
</dbReference>
<dbReference type="PANTHER" id="PTHR10067:SF6">
    <property type="entry name" value="PHOSPHATIDYLSERINE DECARBOXYLASE PROENZYME, MITOCHONDRIAL"/>
    <property type="match status" value="1"/>
</dbReference>
<dbReference type="Pfam" id="PF02666">
    <property type="entry name" value="PS_Dcarbxylase"/>
    <property type="match status" value="1"/>
</dbReference>
<name>PSD_ALIFM</name>
<comment type="function">
    <text evidence="1">Catalyzes the formation of phosphatidylethanolamine (PtdEtn) from phosphatidylserine (PtdSer).</text>
</comment>
<comment type="catalytic activity">
    <reaction evidence="1">
        <text>a 1,2-diacyl-sn-glycero-3-phospho-L-serine + H(+) = a 1,2-diacyl-sn-glycero-3-phosphoethanolamine + CO2</text>
        <dbReference type="Rhea" id="RHEA:20828"/>
        <dbReference type="ChEBI" id="CHEBI:15378"/>
        <dbReference type="ChEBI" id="CHEBI:16526"/>
        <dbReference type="ChEBI" id="CHEBI:57262"/>
        <dbReference type="ChEBI" id="CHEBI:64612"/>
        <dbReference type="EC" id="4.1.1.65"/>
    </reaction>
</comment>
<comment type="cofactor">
    <cofactor evidence="1">
        <name>pyruvate</name>
        <dbReference type="ChEBI" id="CHEBI:15361"/>
    </cofactor>
    <text evidence="1">Binds 1 pyruvoyl group covalently per subunit.</text>
</comment>
<comment type="pathway">
    <text evidence="1">Phospholipid metabolism; phosphatidylethanolamine biosynthesis; phosphatidylethanolamine from CDP-diacylglycerol: step 2/2.</text>
</comment>
<comment type="subunit">
    <text evidence="1">Heterodimer of a large membrane-associated beta subunit and a small pyruvoyl-containing alpha subunit.</text>
</comment>
<comment type="subcellular location">
    <subcellularLocation>
        <location evidence="1">Cell membrane</location>
        <topology evidence="1">Peripheral membrane protein</topology>
    </subcellularLocation>
</comment>
<comment type="PTM">
    <text evidence="1">Is synthesized initially as an inactive proenzyme. Formation of the active enzyme involves a self-maturation process in which the active site pyruvoyl group is generated from an internal serine residue via an autocatalytic post-translational modification. Two non-identical subunits are generated from the proenzyme in this reaction, and the pyruvate is formed at the N-terminus of the alpha chain, which is derived from the carboxyl end of the proenzyme. The autoendoproteolytic cleavage occurs by a canonical serine protease mechanism, in which the side chain hydroxyl group of the serine supplies its oxygen atom to form the C-terminus of the beta chain, while the remainder of the serine residue undergoes an oxidative deamination to produce ammonia and the pyruvoyl prosthetic group on the alpha chain. During this reaction, the Ser that is part of the protease active site of the proenzyme becomes the pyruvoyl prosthetic group, which constitutes an essential element of the active site of the mature decarboxylase.</text>
</comment>
<comment type="similarity">
    <text evidence="1">Belongs to the phosphatidylserine decarboxylase family. PSD-B subfamily. Prokaryotic type I sub-subfamily.</text>
</comment>
<organism>
    <name type="scientific">Aliivibrio fischeri (strain MJ11)</name>
    <name type="common">Vibrio fischeri</name>
    <dbReference type="NCBI Taxonomy" id="388396"/>
    <lineage>
        <taxon>Bacteria</taxon>
        <taxon>Pseudomonadati</taxon>
        <taxon>Pseudomonadota</taxon>
        <taxon>Gammaproteobacteria</taxon>
        <taxon>Vibrionales</taxon>
        <taxon>Vibrionaceae</taxon>
        <taxon>Aliivibrio</taxon>
    </lineage>
</organism>
<reference key="1">
    <citation type="submission" date="2008-08" db="EMBL/GenBank/DDBJ databases">
        <title>Complete sequence of Vibrio fischeri strain MJ11.</title>
        <authorList>
            <person name="Mandel M.J."/>
            <person name="Stabb E.V."/>
            <person name="Ruby E.G."/>
            <person name="Ferriera S."/>
            <person name="Johnson J."/>
            <person name="Kravitz S."/>
            <person name="Beeson K."/>
            <person name="Sutton G."/>
            <person name="Rogers Y.-H."/>
            <person name="Friedman R."/>
            <person name="Frazier M."/>
            <person name="Venter J.C."/>
        </authorList>
    </citation>
    <scope>NUCLEOTIDE SEQUENCE [LARGE SCALE GENOMIC DNA]</scope>
    <source>
        <strain>MJ11</strain>
    </source>
</reference>
<sequence>MSDNLKIGLQYLTPKHALTRLAGKLASAKMGWLTTAVIKWFIKQYNVNMDEAKNPDPEAYSTFNNFFVRELEDGARPINEDGSVISHPADACVSQFGPIMDGKLVQAKGHVYSAQELLGGDETLAAEFMGGEFATLYLSPSDYHRVHMPCDATLRKMIYVPGDLFSVNPLTAENVPNLFARNERVVCIFDTEFGPMAQILVGATIVGSIETTWAETVTPPTGPAVKTWHYPLSGDDMICFKKGEEMGRFKLGSTVINLFAPNSIKFDDSMENGIPTRMGTPFAHIVK</sequence>
<proteinExistence type="inferred from homology"/>
<gene>
    <name evidence="1" type="primary">psd</name>
    <name type="ordered locus">VFMJ11_2453</name>
</gene>
<feature type="chain" id="PRO_1000131414" description="Phosphatidylserine decarboxylase beta chain" evidence="1">
    <location>
        <begin position="1"/>
        <end position="252"/>
    </location>
</feature>
<feature type="chain" id="PRO_1000131415" description="Phosphatidylserine decarboxylase alpha chain" evidence="1">
    <location>
        <begin position="253"/>
        <end position="287"/>
    </location>
</feature>
<feature type="active site" description="Charge relay system; for autoendoproteolytic cleavage activity" evidence="1">
    <location>
        <position position="90"/>
    </location>
</feature>
<feature type="active site" description="Charge relay system; for autoendoproteolytic cleavage activity" evidence="1">
    <location>
        <position position="147"/>
    </location>
</feature>
<feature type="active site" description="Charge relay system; for autoendoproteolytic cleavage activity" evidence="1">
    <location>
        <position position="253"/>
    </location>
</feature>
<feature type="active site" description="Schiff-base intermediate with substrate; via pyruvic acid; for decarboxylase activity" evidence="1">
    <location>
        <position position="253"/>
    </location>
</feature>
<feature type="site" description="Cleavage (non-hydrolytic); by autocatalysis" evidence="1">
    <location>
        <begin position="252"/>
        <end position="253"/>
    </location>
</feature>
<feature type="modified residue" description="Pyruvic acid (Ser); by autocatalysis" evidence="1">
    <location>
        <position position="253"/>
    </location>
</feature>
<keyword id="KW-1003">Cell membrane</keyword>
<keyword id="KW-0210">Decarboxylase</keyword>
<keyword id="KW-0444">Lipid biosynthesis</keyword>
<keyword id="KW-0443">Lipid metabolism</keyword>
<keyword id="KW-0456">Lyase</keyword>
<keyword id="KW-0472">Membrane</keyword>
<keyword id="KW-0594">Phospholipid biosynthesis</keyword>
<keyword id="KW-1208">Phospholipid metabolism</keyword>
<keyword id="KW-0670">Pyruvate</keyword>
<keyword id="KW-0865">Zymogen</keyword>